<comment type="function">
    <text evidence="1">Catalyzes the transfer of the enolpyruvyl moiety of phosphoenolpyruvate (PEP) to the 5-hydroxyl of shikimate-3-phosphate (S3P) to produce enolpyruvyl shikimate-3-phosphate and inorganic phosphate.</text>
</comment>
<comment type="catalytic activity">
    <reaction evidence="1">
        <text>3-phosphoshikimate + phosphoenolpyruvate = 5-O-(1-carboxyvinyl)-3-phosphoshikimate + phosphate</text>
        <dbReference type="Rhea" id="RHEA:21256"/>
        <dbReference type="ChEBI" id="CHEBI:43474"/>
        <dbReference type="ChEBI" id="CHEBI:57701"/>
        <dbReference type="ChEBI" id="CHEBI:58702"/>
        <dbReference type="ChEBI" id="CHEBI:145989"/>
        <dbReference type="EC" id="2.5.1.19"/>
    </reaction>
    <physiologicalReaction direction="left-to-right" evidence="1">
        <dbReference type="Rhea" id="RHEA:21257"/>
    </physiologicalReaction>
</comment>
<comment type="pathway">
    <text evidence="1">Metabolic intermediate biosynthesis; chorismate biosynthesis; chorismate from D-erythrose 4-phosphate and phosphoenolpyruvate: step 6/7.</text>
</comment>
<comment type="subunit">
    <text evidence="1">Monomer.</text>
</comment>
<comment type="subcellular location">
    <subcellularLocation>
        <location evidence="1">Cytoplasm</location>
    </subcellularLocation>
</comment>
<comment type="similarity">
    <text evidence="1">Belongs to the EPSP synthase family.</text>
</comment>
<feature type="chain" id="PRO_1000099767" description="3-phosphoshikimate 1-carboxyvinyltransferase">
    <location>
        <begin position="1"/>
        <end position="440"/>
    </location>
</feature>
<feature type="active site" description="Proton acceptor" evidence="1">
    <location>
        <position position="320"/>
    </location>
</feature>
<feature type="binding site" evidence="1">
    <location>
        <position position="26"/>
    </location>
    <ligand>
        <name>3-phosphoshikimate</name>
        <dbReference type="ChEBI" id="CHEBI:145989"/>
    </ligand>
</feature>
<feature type="binding site" evidence="1">
    <location>
        <position position="26"/>
    </location>
    <ligand>
        <name>phosphoenolpyruvate</name>
        <dbReference type="ChEBI" id="CHEBI:58702"/>
    </ligand>
</feature>
<feature type="binding site" evidence="1">
    <location>
        <position position="27"/>
    </location>
    <ligand>
        <name>3-phosphoshikimate</name>
        <dbReference type="ChEBI" id="CHEBI:145989"/>
    </ligand>
</feature>
<feature type="binding site" evidence="1">
    <location>
        <position position="31"/>
    </location>
    <ligand>
        <name>3-phosphoshikimate</name>
        <dbReference type="ChEBI" id="CHEBI:145989"/>
    </ligand>
</feature>
<feature type="binding site" evidence="1">
    <location>
        <position position="99"/>
    </location>
    <ligand>
        <name>phosphoenolpyruvate</name>
        <dbReference type="ChEBI" id="CHEBI:58702"/>
    </ligand>
</feature>
<feature type="binding site" evidence="1">
    <location>
        <position position="127"/>
    </location>
    <ligand>
        <name>phosphoenolpyruvate</name>
        <dbReference type="ChEBI" id="CHEBI:58702"/>
    </ligand>
</feature>
<feature type="binding site" evidence="1">
    <location>
        <position position="172"/>
    </location>
    <ligand>
        <name>3-phosphoshikimate</name>
        <dbReference type="ChEBI" id="CHEBI:145989"/>
    </ligand>
</feature>
<feature type="binding site" evidence="1">
    <location>
        <position position="174"/>
    </location>
    <ligand>
        <name>3-phosphoshikimate</name>
        <dbReference type="ChEBI" id="CHEBI:145989"/>
    </ligand>
</feature>
<feature type="binding site" evidence="1">
    <location>
        <position position="174"/>
    </location>
    <ligand>
        <name>phosphoenolpyruvate</name>
        <dbReference type="ChEBI" id="CHEBI:58702"/>
    </ligand>
</feature>
<feature type="binding site" evidence="1">
    <location>
        <position position="320"/>
    </location>
    <ligand>
        <name>3-phosphoshikimate</name>
        <dbReference type="ChEBI" id="CHEBI:145989"/>
    </ligand>
</feature>
<feature type="binding site" evidence="1">
    <location>
        <position position="347"/>
    </location>
    <ligand>
        <name>3-phosphoshikimate</name>
        <dbReference type="ChEBI" id="CHEBI:145989"/>
    </ligand>
</feature>
<feature type="binding site" evidence="1">
    <location>
        <position position="351"/>
    </location>
    <ligand>
        <name>phosphoenolpyruvate</name>
        <dbReference type="ChEBI" id="CHEBI:58702"/>
    </ligand>
</feature>
<feature type="binding site" evidence="1">
    <location>
        <position position="392"/>
    </location>
    <ligand>
        <name>phosphoenolpyruvate</name>
        <dbReference type="ChEBI" id="CHEBI:58702"/>
    </ligand>
</feature>
<name>AROA_XANOP</name>
<dbReference type="EC" id="2.5.1.19" evidence="1"/>
<dbReference type="EMBL" id="CP000967">
    <property type="protein sequence ID" value="ACD58777.1"/>
    <property type="molecule type" value="Genomic_DNA"/>
</dbReference>
<dbReference type="RefSeq" id="WP_011259050.1">
    <property type="nucleotide sequence ID" value="NC_010717.2"/>
</dbReference>
<dbReference type="SMR" id="B2SJJ3"/>
<dbReference type="KEGG" id="xop:PXO_00715"/>
<dbReference type="eggNOG" id="COG0128">
    <property type="taxonomic scope" value="Bacteria"/>
</dbReference>
<dbReference type="HOGENOM" id="CLU_024321_0_1_6"/>
<dbReference type="UniPathway" id="UPA00053">
    <property type="reaction ID" value="UER00089"/>
</dbReference>
<dbReference type="Proteomes" id="UP000001740">
    <property type="component" value="Chromosome"/>
</dbReference>
<dbReference type="GO" id="GO:0005737">
    <property type="term" value="C:cytoplasm"/>
    <property type="evidence" value="ECO:0007669"/>
    <property type="project" value="UniProtKB-SubCell"/>
</dbReference>
<dbReference type="GO" id="GO:0003866">
    <property type="term" value="F:3-phosphoshikimate 1-carboxyvinyltransferase activity"/>
    <property type="evidence" value="ECO:0007669"/>
    <property type="project" value="UniProtKB-UniRule"/>
</dbReference>
<dbReference type="GO" id="GO:0008652">
    <property type="term" value="P:amino acid biosynthetic process"/>
    <property type="evidence" value="ECO:0007669"/>
    <property type="project" value="UniProtKB-KW"/>
</dbReference>
<dbReference type="GO" id="GO:0009073">
    <property type="term" value="P:aromatic amino acid family biosynthetic process"/>
    <property type="evidence" value="ECO:0007669"/>
    <property type="project" value="UniProtKB-KW"/>
</dbReference>
<dbReference type="GO" id="GO:0009423">
    <property type="term" value="P:chorismate biosynthetic process"/>
    <property type="evidence" value="ECO:0007669"/>
    <property type="project" value="UniProtKB-UniRule"/>
</dbReference>
<dbReference type="CDD" id="cd01556">
    <property type="entry name" value="EPSP_synthase"/>
    <property type="match status" value="1"/>
</dbReference>
<dbReference type="FunFam" id="3.65.10.10:FF:000005">
    <property type="entry name" value="3-phosphoshikimate 1-carboxyvinyltransferase"/>
    <property type="match status" value="1"/>
</dbReference>
<dbReference type="FunFam" id="3.65.10.10:FF:000006">
    <property type="entry name" value="3-phosphoshikimate 1-carboxyvinyltransferase"/>
    <property type="match status" value="1"/>
</dbReference>
<dbReference type="Gene3D" id="3.65.10.10">
    <property type="entry name" value="Enolpyruvate transferase domain"/>
    <property type="match status" value="2"/>
</dbReference>
<dbReference type="HAMAP" id="MF_00210">
    <property type="entry name" value="EPSP_synth"/>
    <property type="match status" value="1"/>
</dbReference>
<dbReference type="InterPro" id="IPR001986">
    <property type="entry name" value="Enolpyruvate_Tfrase_dom"/>
</dbReference>
<dbReference type="InterPro" id="IPR036968">
    <property type="entry name" value="Enolpyruvate_Tfrase_sf"/>
</dbReference>
<dbReference type="InterPro" id="IPR006264">
    <property type="entry name" value="EPSP_synthase"/>
</dbReference>
<dbReference type="InterPro" id="IPR023193">
    <property type="entry name" value="EPSP_synthase_CS"/>
</dbReference>
<dbReference type="InterPro" id="IPR013792">
    <property type="entry name" value="RNA3'P_cycl/enolpyr_Trfase_a/b"/>
</dbReference>
<dbReference type="NCBIfam" id="TIGR01356">
    <property type="entry name" value="aroA"/>
    <property type="match status" value="1"/>
</dbReference>
<dbReference type="PANTHER" id="PTHR21090">
    <property type="entry name" value="AROM/DEHYDROQUINATE SYNTHASE"/>
    <property type="match status" value="1"/>
</dbReference>
<dbReference type="PANTHER" id="PTHR21090:SF5">
    <property type="entry name" value="PENTAFUNCTIONAL AROM POLYPEPTIDE"/>
    <property type="match status" value="1"/>
</dbReference>
<dbReference type="Pfam" id="PF00275">
    <property type="entry name" value="EPSP_synthase"/>
    <property type="match status" value="1"/>
</dbReference>
<dbReference type="PIRSF" id="PIRSF000505">
    <property type="entry name" value="EPSPS"/>
    <property type="match status" value="1"/>
</dbReference>
<dbReference type="SUPFAM" id="SSF55205">
    <property type="entry name" value="EPT/RTPC-like"/>
    <property type="match status" value="1"/>
</dbReference>
<dbReference type="PROSITE" id="PS00104">
    <property type="entry name" value="EPSP_SYNTHASE_1"/>
    <property type="match status" value="1"/>
</dbReference>
<dbReference type="PROSITE" id="PS00885">
    <property type="entry name" value="EPSP_SYNTHASE_2"/>
    <property type="match status" value="1"/>
</dbReference>
<proteinExistence type="inferred from homology"/>
<evidence type="ECO:0000255" key="1">
    <source>
        <dbReference type="HAMAP-Rule" id="MF_00210"/>
    </source>
</evidence>
<gene>
    <name evidence="1" type="primary">aroA</name>
    <name type="ordered locus">PXO_00715</name>
</gene>
<sequence length="440" mass="45474">MSSNTHHWIARRGTALQGSLAIPGDKSVSHRAVMFAALADGVSQIDGFLEGEDTRSTAAIFAKLGVRIETPSASQRIVHGVGVDGLQPPTGALDCGNAGTGMRLLAGLLAAQRFDSVLVGDESLSKRPMRRVTGPLAQMGARIDTQDDGTPPLRVHGGQALHGIDFVSPVASAQVKSAVLLAGLYAQGETSVTEPHPTRDYSERMLSAFGVDIDFSPGSARLRGGQRLRATDIAVPADFSSAAFFIVAASIVPDSEVVLRAVGLNPRRTGLLAALRLMGADISEENHAEHGGEPVADLRVRYAPLRGAQIPEALVPDMIDEFPALFVAATAASGQTVVTGAAELRVKESDRLAAMATGLRTLGVQVDETPDGATIHGGSIGSGVIESHGDHRIAMAFAIAGQLSSGSVRVNDVANVATSFPGFDTLAQGAGFGLEAAESG</sequence>
<keyword id="KW-0028">Amino-acid biosynthesis</keyword>
<keyword id="KW-0057">Aromatic amino acid biosynthesis</keyword>
<keyword id="KW-0963">Cytoplasm</keyword>
<keyword id="KW-0808">Transferase</keyword>
<organism>
    <name type="scientific">Xanthomonas oryzae pv. oryzae (strain PXO99A)</name>
    <dbReference type="NCBI Taxonomy" id="360094"/>
    <lineage>
        <taxon>Bacteria</taxon>
        <taxon>Pseudomonadati</taxon>
        <taxon>Pseudomonadota</taxon>
        <taxon>Gammaproteobacteria</taxon>
        <taxon>Lysobacterales</taxon>
        <taxon>Lysobacteraceae</taxon>
        <taxon>Xanthomonas</taxon>
    </lineage>
</organism>
<protein>
    <recommendedName>
        <fullName evidence="1">3-phosphoshikimate 1-carboxyvinyltransferase</fullName>
        <ecNumber evidence="1">2.5.1.19</ecNumber>
    </recommendedName>
    <alternativeName>
        <fullName evidence="1">5-enolpyruvylshikimate-3-phosphate synthase</fullName>
        <shortName evidence="1">EPSP synthase</shortName>
        <shortName evidence="1">EPSPS</shortName>
    </alternativeName>
</protein>
<reference key="1">
    <citation type="journal article" date="2008" name="BMC Genomics">
        <title>Genome sequence and rapid evolution of the rice pathogen Xanthomonas oryzae pv. oryzae PXO99A.</title>
        <authorList>
            <person name="Salzberg S.L."/>
            <person name="Sommer D.D."/>
            <person name="Schatz M.C."/>
            <person name="Phillippy A.M."/>
            <person name="Rabinowicz P.D."/>
            <person name="Tsuge S."/>
            <person name="Furutani A."/>
            <person name="Ochiai H."/>
            <person name="Delcher A.L."/>
            <person name="Kelley D."/>
            <person name="Madupu R."/>
            <person name="Puiu D."/>
            <person name="Radune D."/>
            <person name="Shumway M."/>
            <person name="Trapnell C."/>
            <person name="Aparna G."/>
            <person name="Jha G."/>
            <person name="Pandey A."/>
            <person name="Patil P.B."/>
            <person name="Ishihara H."/>
            <person name="Meyer D.F."/>
            <person name="Szurek B."/>
            <person name="Verdier V."/>
            <person name="Koebnik R."/>
            <person name="Dow J.M."/>
            <person name="Ryan R.P."/>
            <person name="Hirata H."/>
            <person name="Tsuyumu S."/>
            <person name="Won Lee S."/>
            <person name="Seo Y.-S."/>
            <person name="Sriariyanum M."/>
            <person name="Ronald P.C."/>
            <person name="Sonti R.V."/>
            <person name="Van Sluys M.-A."/>
            <person name="Leach J.E."/>
            <person name="White F.F."/>
            <person name="Bogdanove A.J."/>
        </authorList>
    </citation>
    <scope>NUCLEOTIDE SEQUENCE [LARGE SCALE GENOMIC DNA]</scope>
    <source>
        <strain>PXO99A</strain>
    </source>
</reference>
<accession>B2SJJ3</accession>